<dbReference type="EMBL" id="CP000416">
    <property type="protein sequence ID" value="ABJ64750.1"/>
    <property type="molecule type" value="Genomic_DNA"/>
</dbReference>
<dbReference type="RefSeq" id="WP_011668484.1">
    <property type="nucleotide sequence ID" value="NC_008497.1"/>
</dbReference>
<dbReference type="SMR" id="Q03PX2"/>
<dbReference type="STRING" id="387344.LVIS_1675"/>
<dbReference type="GeneID" id="56993536"/>
<dbReference type="KEGG" id="lbr:LVIS_1675"/>
<dbReference type="eggNOG" id="COG0097">
    <property type="taxonomic scope" value="Bacteria"/>
</dbReference>
<dbReference type="HOGENOM" id="CLU_065464_1_2_9"/>
<dbReference type="Proteomes" id="UP000001652">
    <property type="component" value="Chromosome"/>
</dbReference>
<dbReference type="GO" id="GO:0022625">
    <property type="term" value="C:cytosolic large ribosomal subunit"/>
    <property type="evidence" value="ECO:0007669"/>
    <property type="project" value="TreeGrafter"/>
</dbReference>
<dbReference type="GO" id="GO:0019843">
    <property type="term" value="F:rRNA binding"/>
    <property type="evidence" value="ECO:0007669"/>
    <property type="project" value="UniProtKB-UniRule"/>
</dbReference>
<dbReference type="GO" id="GO:0003735">
    <property type="term" value="F:structural constituent of ribosome"/>
    <property type="evidence" value="ECO:0007669"/>
    <property type="project" value="InterPro"/>
</dbReference>
<dbReference type="GO" id="GO:0002181">
    <property type="term" value="P:cytoplasmic translation"/>
    <property type="evidence" value="ECO:0007669"/>
    <property type="project" value="TreeGrafter"/>
</dbReference>
<dbReference type="FunFam" id="3.90.930.12:FF:000001">
    <property type="entry name" value="50S ribosomal protein L6"/>
    <property type="match status" value="1"/>
</dbReference>
<dbReference type="FunFam" id="3.90.930.12:FF:000002">
    <property type="entry name" value="50S ribosomal protein L6"/>
    <property type="match status" value="1"/>
</dbReference>
<dbReference type="Gene3D" id="3.90.930.12">
    <property type="entry name" value="Ribosomal protein L6, alpha-beta domain"/>
    <property type="match status" value="2"/>
</dbReference>
<dbReference type="HAMAP" id="MF_01365_B">
    <property type="entry name" value="Ribosomal_uL6_B"/>
    <property type="match status" value="1"/>
</dbReference>
<dbReference type="InterPro" id="IPR000702">
    <property type="entry name" value="Ribosomal_uL6-like"/>
</dbReference>
<dbReference type="InterPro" id="IPR036789">
    <property type="entry name" value="Ribosomal_uL6-like_a/b-dom_sf"/>
</dbReference>
<dbReference type="InterPro" id="IPR020040">
    <property type="entry name" value="Ribosomal_uL6_a/b-dom"/>
</dbReference>
<dbReference type="InterPro" id="IPR019906">
    <property type="entry name" value="Ribosomal_uL6_bac-type"/>
</dbReference>
<dbReference type="InterPro" id="IPR002358">
    <property type="entry name" value="Ribosomal_uL6_CS"/>
</dbReference>
<dbReference type="NCBIfam" id="TIGR03654">
    <property type="entry name" value="L6_bact"/>
    <property type="match status" value="1"/>
</dbReference>
<dbReference type="PANTHER" id="PTHR11655">
    <property type="entry name" value="60S/50S RIBOSOMAL PROTEIN L6/L9"/>
    <property type="match status" value="1"/>
</dbReference>
<dbReference type="PANTHER" id="PTHR11655:SF14">
    <property type="entry name" value="LARGE RIBOSOMAL SUBUNIT PROTEIN UL6M"/>
    <property type="match status" value="1"/>
</dbReference>
<dbReference type="Pfam" id="PF00347">
    <property type="entry name" value="Ribosomal_L6"/>
    <property type="match status" value="2"/>
</dbReference>
<dbReference type="PIRSF" id="PIRSF002162">
    <property type="entry name" value="Ribosomal_L6"/>
    <property type="match status" value="1"/>
</dbReference>
<dbReference type="PRINTS" id="PR00059">
    <property type="entry name" value="RIBOSOMALL6"/>
</dbReference>
<dbReference type="SUPFAM" id="SSF56053">
    <property type="entry name" value="Ribosomal protein L6"/>
    <property type="match status" value="2"/>
</dbReference>
<dbReference type="PROSITE" id="PS00525">
    <property type="entry name" value="RIBOSOMAL_L6_1"/>
    <property type="match status" value="1"/>
</dbReference>
<gene>
    <name evidence="1" type="primary">rplF</name>
    <name type="ordered locus">LVIS_1675</name>
</gene>
<name>RL6_LEVBA</name>
<reference key="1">
    <citation type="journal article" date="2006" name="Proc. Natl. Acad. Sci. U.S.A.">
        <title>Comparative genomics of the lactic acid bacteria.</title>
        <authorList>
            <person name="Makarova K.S."/>
            <person name="Slesarev A."/>
            <person name="Wolf Y.I."/>
            <person name="Sorokin A."/>
            <person name="Mirkin B."/>
            <person name="Koonin E.V."/>
            <person name="Pavlov A."/>
            <person name="Pavlova N."/>
            <person name="Karamychev V."/>
            <person name="Polouchine N."/>
            <person name="Shakhova V."/>
            <person name="Grigoriev I."/>
            <person name="Lou Y."/>
            <person name="Rohksar D."/>
            <person name="Lucas S."/>
            <person name="Huang K."/>
            <person name="Goodstein D.M."/>
            <person name="Hawkins T."/>
            <person name="Plengvidhya V."/>
            <person name="Welker D."/>
            <person name="Hughes J."/>
            <person name="Goh Y."/>
            <person name="Benson A."/>
            <person name="Baldwin K."/>
            <person name="Lee J.-H."/>
            <person name="Diaz-Muniz I."/>
            <person name="Dosti B."/>
            <person name="Smeianov V."/>
            <person name="Wechter W."/>
            <person name="Barabote R."/>
            <person name="Lorca G."/>
            <person name="Altermann E."/>
            <person name="Barrangou R."/>
            <person name="Ganesan B."/>
            <person name="Xie Y."/>
            <person name="Rawsthorne H."/>
            <person name="Tamir D."/>
            <person name="Parker C."/>
            <person name="Breidt F."/>
            <person name="Broadbent J.R."/>
            <person name="Hutkins R."/>
            <person name="O'Sullivan D."/>
            <person name="Steele J."/>
            <person name="Unlu G."/>
            <person name="Saier M.H. Jr."/>
            <person name="Klaenhammer T."/>
            <person name="Richardson P."/>
            <person name="Kozyavkin S."/>
            <person name="Weimer B.C."/>
            <person name="Mills D.A."/>
        </authorList>
    </citation>
    <scope>NUCLEOTIDE SEQUENCE [LARGE SCALE GENOMIC DNA]</scope>
    <source>
        <strain>ATCC 367 / BCRC 12310 / CIP 105137 / JCM 1170 / LMG 11437 / NCIMB 947 / NCTC 947</strain>
    </source>
</reference>
<sequence length="178" mass="19371">MSRIGYKTVNVPAGVEVKRDGDQVTVKGPKGELTRTFSSVISMKISDGAVDFDRPDNNNKTRALHGTQRANLNNMVEGVVSGFAKTLKLVGVGYRVQAKGKTLILSVGYSNPVEMAIPETLEVKVPDNTTINISGISKQEVGDFAAEVRAVRSPEPYKGKGIRYENEYVRIREGKTGK</sequence>
<keyword id="KW-1185">Reference proteome</keyword>
<keyword id="KW-0687">Ribonucleoprotein</keyword>
<keyword id="KW-0689">Ribosomal protein</keyword>
<keyword id="KW-0694">RNA-binding</keyword>
<keyword id="KW-0699">rRNA-binding</keyword>
<protein>
    <recommendedName>
        <fullName evidence="1">Large ribosomal subunit protein uL6</fullName>
    </recommendedName>
    <alternativeName>
        <fullName evidence="2">50S ribosomal protein L6</fullName>
    </alternativeName>
</protein>
<accession>Q03PX2</accession>
<feature type="chain" id="PRO_1000055245" description="Large ribosomal subunit protein uL6">
    <location>
        <begin position="1"/>
        <end position="178"/>
    </location>
</feature>
<organism>
    <name type="scientific">Levilactobacillus brevis (strain ATCC 367 / BCRC 12310 / CIP 105137 / JCM 1170 / LMG 11437 / NCIMB 947 / NCTC 947)</name>
    <name type="common">Lactobacillus brevis</name>
    <dbReference type="NCBI Taxonomy" id="387344"/>
    <lineage>
        <taxon>Bacteria</taxon>
        <taxon>Bacillati</taxon>
        <taxon>Bacillota</taxon>
        <taxon>Bacilli</taxon>
        <taxon>Lactobacillales</taxon>
        <taxon>Lactobacillaceae</taxon>
        <taxon>Levilactobacillus</taxon>
    </lineage>
</organism>
<comment type="function">
    <text evidence="1">This protein binds to the 23S rRNA, and is important in its secondary structure. It is located near the subunit interface in the base of the L7/L12 stalk, and near the tRNA binding site of the peptidyltransferase center.</text>
</comment>
<comment type="subunit">
    <text evidence="1">Part of the 50S ribosomal subunit.</text>
</comment>
<comment type="similarity">
    <text evidence="1">Belongs to the universal ribosomal protein uL6 family.</text>
</comment>
<proteinExistence type="inferred from homology"/>
<evidence type="ECO:0000255" key="1">
    <source>
        <dbReference type="HAMAP-Rule" id="MF_01365"/>
    </source>
</evidence>
<evidence type="ECO:0000305" key="2"/>